<proteinExistence type="inferred from homology"/>
<accession>B0T202</accession>
<organism>
    <name type="scientific">Caulobacter sp. (strain K31)</name>
    <dbReference type="NCBI Taxonomy" id="366602"/>
    <lineage>
        <taxon>Bacteria</taxon>
        <taxon>Pseudomonadati</taxon>
        <taxon>Pseudomonadota</taxon>
        <taxon>Alphaproteobacteria</taxon>
        <taxon>Caulobacterales</taxon>
        <taxon>Caulobacteraceae</taxon>
        <taxon>Caulobacter</taxon>
    </lineage>
</organism>
<protein>
    <recommendedName>
        <fullName evidence="1">UPF0386 protein Caul_4643</fullName>
    </recommendedName>
</protein>
<name>Y4643_CAUSK</name>
<gene>
    <name type="ordered locus">Caul_4643</name>
</gene>
<sequence>MNISKPQQRTLHALAQGARIELLRDDHGRIVAAYCITGEGWRLSDCSLAVFKALKKRRFIASSGGGPYRITRDGAVNLRAQVDNRVTARGG</sequence>
<reference key="1">
    <citation type="submission" date="2008-01" db="EMBL/GenBank/DDBJ databases">
        <title>Complete sequence of chromosome of Caulobacter sp. K31.</title>
        <authorList>
            <consortium name="US DOE Joint Genome Institute"/>
            <person name="Copeland A."/>
            <person name="Lucas S."/>
            <person name="Lapidus A."/>
            <person name="Barry K."/>
            <person name="Glavina del Rio T."/>
            <person name="Dalin E."/>
            <person name="Tice H."/>
            <person name="Pitluck S."/>
            <person name="Bruce D."/>
            <person name="Goodwin L."/>
            <person name="Thompson L.S."/>
            <person name="Brettin T."/>
            <person name="Detter J.C."/>
            <person name="Han C."/>
            <person name="Schmutz J."/>
            <person name="Larimer F."/>
            <person name="Land M."/>
            <person name="Hauser L."/>
            <person name="Kyrpides N."/>
            <person name="Kim E."/>
            <person name="Stephens C."/>
            <person name="Richardson P."/>
        </authorList>
    </citation>
    <scope>NUCLEOTIDE SEQUENCE [LARGE SCALE GENOMIC DNA]</scope>
    <source>
        <strain>K31</strain>
    </source>
</reference>
<evidence type="ECO:0000255" key="1">
    <source>
        <dbReference type="HAMAP-Rule" id="MF_00827"/>
    </source>
</evidence>
<dbReference type="EMBL" id="CP000927">
    <property type="protein sequence ID" value="ABZ73763.1"/>
    <property type="molecule type" value="Genomic_DNA"/>
</dbReference>
<dbReference type="KEGG" id="cak:Caul_4643"/>
<dbReference type="eggNOG" id="COG3811">
    <property type="taxonomic scope" value="Bacteria"/>
</dbReference>
<dbReference type="HOGENOM" id="CLU_164736_0_0_5"/>
<dbReference type="OrthoDB" id="7204880at2"/>
<dbReference type="HAMAP" id="MF_00827">
    <property type="entry name" value="UPF0386"/>
    <property type="match status" value="1"/>
</dbReference>
<dbReference type="InterPro" id="IPR018654">
    <property type="entry name" value="YjhX_toxin"/>
</dbReference>
<dbReference type="NCBIfam" id="NF010240">
    <property type="entry name" value="PRK13687.1"/>
    <property type="match status" value="1"/>
</dbReference>
<dbReference type="Pfam" id="PF09857">
    <property type="entry name" value="YjhX_toxin"/>
    <property type="match status" value="1"/>
</dbReference>
<comment type="similarity">
    <text evidence="1">Belongs to the UPF0386 family.</text>
</comment>
<feature type="chain" id="PRO_1000083943" description="UPF0386 protein Caul_4643">
    <location>
        <begin position="1"/>
        <end position="91"/>
    </location>
</feature>